<reference key="1">
    <citation type="journal article" date="2003" name="Nucleic Acids Res.">
        <title>Complete chloroplast DNA sequence of the moss Physcomitrella patens: evidence for the loss and relocation of rpoA from the chloroplast to the nucleus.</title>
        <authorList>
            <person name="Sugiura C."/>
            <person name="Kobayashi Y."/>
            <person name="Setsuyuki A."/>
            <person name="Sugita C."/>
            <person name="Sugita M."/>
        </authorList>
    </citation>
    <scope>NUCLEOTIDE SEQUENCE [LARGE SCALE GENOMIC DNA]</scope>
    <source>
        <strain>cv. Gransden 2004</strain>
    </source>
</reference>
<dbReference type="EC" id="7.1.1.-" evidence="1"/>
<dbReference type="EMBL" id="AP005672">
    <property type="protein sequence ID" value="BAC85015.1"/>
    <property type="molecule type" value="Genomic_DNA"/>
</dbReference>
<dbReference type="RefSeq" id="NP_904166.1">
    <property type="nucleotide sequence ID" value="NC_005087.2"/>
</dbReference>
<dbReference type="RefSeq" id="YP_009477497.1">
    <property type="nucleotide sequence ID" value="NC_037465.1"/>
</dbReference>
<dbReference type="SMR" id="Q6YXR9"/>
<dbReference type="FunCoup" id="Q6YXR9">
    <property type="interactions" value="27"/>
</dbReference>
<dbReference type="STRING" id="3218.Q6YXR9"/>
<dbReference type="GeneID" id="2546809"/>
<dbReference type="GeneID" id="36487108"/>
<dbReference type="KEGG" id="ppp:2546809"/>
<dbReference type="InParanoid" id="Q6YXR9"/>
<dbReference type="OrthoDB" id="1876953at2759"/>
<dbReference type="Proteomes" id="UP000006727">
    <property type="component" value="Chloroplast"/>
</dbReference>
<dbReference type="GO" id="GO:0009535">
    <property type="term" value="C:chloroplast thylakoid membrane"/>
    <property type="evidence" value="ECO:0007669"/>
    <property type="project" value="UniProtKB-SubCell"/>
</dbReference>
<dbReference type="GO" id="GO:0008137">
    <property type="term" value="F:NADH dehydrogenase (ubiquinone) activity"/>
    <property type="evidence" value="ECO:0007669"/>
    <property type="project" value="InterPro"/>
</dbReference>
<dbReference type="GO" id="GO:0048038">
    <property type="term" value="F:quinone binding"/>
    <property type="evidence" value="ECO:0007669"/>
    <property type="project" value="UniProtKB-KW"/>
</dbReference>
<dbReference type="GO" id="GO:0042773">
    <property type="term" value="P:ATP synthesis coupled electron transport"/>
    <property type="evidence" value="ECO:0007669"/>
    <property type="project" value="InterPro"/>
</dbReference>
<dbReference type="GO" id="GO:0019684">
    <property type="term" value="P:photosynthesis, light reaction"/>
    <property type="evidence" value="ECO:0007669"/>
    <property type="project" value="UniProtKB-UniRule"/>
</dbReference>
<dbReference type="HAMAP" id="MF_00445">
    <property type="entry name" value="NDH1_NuoN_1"/>
    <property type="match status" value="1"/>
</dbReference>
<dbReference type="InterPro" id="IPR010096">
    <property type="entry name" value="NADH-Q_OxRdtase_suN/2"/>
</dbReference>
<dbReference type="InterPro" id="IPR001750">
    <property type="entry name" value="ND/Mrp_TM"/>
</dbReference>
<dbReference type="InterPro" id="IPR045693">
    <property type="entry name" value="Ndh2_N"/>
</dbReference>
<dbReference type="NCBIfam" id="TIGR01770">
    <property type="entry name" value="NDH_I_N"/>
    <property type="match status" value="1"/>
</dbReference>
<dbReference type="NCBIfam" id="NF002701">
    <property type="entry name" value="PRK02504.1"/>
    <property type="match status" value="1"/>
</dbReference>
<dbReference type="PANTHER" id="PTHR22773">
    <property type="entry name" value="NADH DEHYDROGENASE"/>
    <property type="match status" value="1"/>
</dbReference>
<dbReference type="Pfam" id="PF19530">
    <property type="entry name" value="Ndh2_N"/>
    <property type="match status" value="1"/>
</dbReference>
<dbReference type="Pfam" id="PF00361">
    <property type="entry name" value="Proton_antipo_M"/>
    <property type="match status" value="1"/>
</dbReference>
<dbReference type="PRINTS" id="PR01434">
    <property type="entry name" value="NADHDHGNASE5"/>
</dbReference>
<sequence>MELELDLSFFYKTTILPECVLIFCLISILILDLILKIKDKNVFFFISLVSLLLSIFILIFQLKEEPVISFLGNFQADNFNKIFRIFIALCSILCIPLSIDFIKCTKLAITEFLIFLLTATIGGMFLCGANDLITIFVSLECLSLCSYLLSGYTKKDVRSNEAVMKYLLIGGTSSSILAYGFSWLYGLSGGEFQLQKIADGLVSTEMYNSFGSLLALVFIIVGIGFKLSLVPFHQWTPDVYEGSPTPVVAFLSVASKIAGLALLVRLFNIVFPFLPNQWHSLLEISAICSMILGNLVAITQTSMKRMLAYSSISQIGYLMIGLVTGNFDGYTSMIVYLLFYIFMNLGTFACIILFGLRTGTDNIRDYSGLILKDPLLTFSLALCLLSLGGIPPLSGFFGKLYLFWCAWKTGLYFLVFIGLFTSVISIYYYLKIIKLLITTENKEVTSYVQSYTVSSFSLLSKNSIEVSIIICVIASIFLGIFMNPIINILQINLHLNTFTNI</sequence>
<accession>Q6YXR9</accession>
<organism>
    <name type="scientific">Physcomitrium patens</name>
    <name type="common">Spreading-leaved earth moss</name>
    <name type="synonym">Physcomitrella patens</name>
    <dbReference type="NCBI Taxonomy" id="3218"/>
    <lineage>
        <taxon>Eukaryota</taxon>
        <taxon>Viridiplantae</taxon>
        <taxon>Streptophyta</taxon>
        <taxon>Embryophyta</taxon>
        <taxon>Bryophyta</taxon>
        <taxon>Bryophytina</taxon>
        <taxon>Bryopsida</taxon>
        <taxon>Funariidae</taxon>
        <taxon>Funariales</taxon>
        <taxon>Funariaceae</taxon>
        <taxon>Physcomitrium</taxon>
    </lineage>
</organism>
<keyword id="KW-0150">Chloroplast</keyword>
<keyword id="KW-0472">Membrane</keyword>
<keyword id="KW-0520">NAD</keyword>
<keyword id="KW-0521">NADP</keyword>
<keyword id="KW-0934">Plastid</keyword>
<keyword id="KW-0618">Plastoquinone</keyword>
<keyword id="KW-0874">Quinone</keyword>
<keyword id="KW-1185">Reference proteome</keyword>
<keyword id="KW-0793">Thylakoid</keyword>
<keyword id="KW-1278">Translocase</keyword>
<keyword id="KW-0812">Transmembrane</keyword>
<keyword id="KW-1133">Transmembrane helix</keyword>
<keyword id="KW-0813">Transport</keyword>
<comment type="function">
    <text evidence="1">NDH shuttles electrons from NAD(P)H:plastoquinone, via FMN and iron-sulfur (Fe-S) centers, to quinones in the photosynthetic chain and possibly in a chloroplast respiratory chain. The immediate electron acceptor for the enzyme in this species is believed to be plastoquinone. Couples the redox reaction to proton translocation, and thus conserves the redox energy in a proton gradient.</text>
</comment>
<comment type="catalytic activity">
    <reaction evidence="1">
        <text>a plastoquinone + NADH + (n+1) H(+)(in) = a plastoquinol + NAD(+) + n H(+)(out)</text>
        <dbReference type="Rhea" id="RHEA:42608"/>
        <dbReference type="Rhea" id="RHEA-COMP:9561"/>
        <dbReference type="Rhea" id="RHEA-COMP:9562"/>
        <dbReference type="ChEBI" id="CHEBI:15378"/>
        <dbReference type="ChEBI" id="CHEBI:17757"/>
        <dbReference type="ChEBI" id="CHEBI:57540"/>
        <dbReference type="ChEBI" id="CHEBI:57945"/>
        <dbReference type="ChEBI" id="CHEBI:62192"/>
    </reaction>
</comment>
<comment type="catalytic activity">
    <reaction evidence="1">
        <text>a plastoquinone + NADPH + (n+1) H(+)(in) = a plastoquinol + NADP(+) + n H(+)(out)</text>
        <dbReference type="Rhea" id="RHEA:42612"/>
        <dbReference type="Rhea" id="RHEA-COMP:9561"/>
        <dbReference type="Rhea" id="RHEA-COMP:9562"/>
        <dbReference type="ChEBI" id="CHEBI:15378"/>
        <dbReference type="ChEBI" id="CHEBI:17757"/>
        <dbReference type="ChEBI" id="CHEBI:57783"/>
        <dbReference type="ChEBI" id="CHEBI:58349"/>
        <dbReference type="ChEBI" id="CHEBI:62192"/>
    </reaction>
</comment>
<comment type="subunit">
    <text evidence="1">NDH is composed of at least 16 different subunits, 5 of which are encoded in the nucleus.</text>
</comment>
<comment type="subcellular location">
    <subcellularLocation>
        <location evidence="1">Plastid</location>
        <location evidence="1">Chloroplast thylakoid membrane</location>
        <topology evidence="1">Multi-pass membrane protein</topology>
    </subcellularLocation>
</comment>
<comment type="similarity">
    <text evidence="1">Belongs to the complex I subunit 2 family.</text>
</comment>
<protein>
    <recommendedName>
        <fullName evidence="1">NAD(P)H-quinone oxidoreductase subunit 2, chloroplastic</fullName>
        <ecNumber evidence="1">7.1.1.-</ecNumber>
    </recommendedName>
    <alternativeName>
        <fullName evidence="1">NAD(P)H dehydrogenase, subunit 2</fullName>
    </alternativeName>
    <alternativeName>
        <fullName evidence="1">NADH-plastoquinone oxidoreductase subunit 2</fullName>
    </alternativeName>
</protein>
<geneLocation type="chloroplast"/>
<gene>
    <name evidence="1" type="primary">ndhB</name>
</gene>
<evidence type="ECO:0000255" key="1">
    <source>
        <dbReference type="HAMAP-Rule" id="MF_00445"/>
    </source>
</evidence>
<name>NU2C_PHYPA</name>
<feature type="chain" id="PRO_0000225348" description="NAD(P)H-quinone oxidoreductase subunit 2, chloroplastic">
    <location>
        <begin position="1"/>
        <end position="501"/>
    </location>
</feature>
<feature type="transmembrane region" description="Helical" evidence="1">
    <location>
        <begin position="15"/>
        <end position="35"/>
    </location>
</feature>
<feature type="transmembrane region" description="Helical" evidence="1">
    <location>
        <begin position="42"/>
        <end position="62"/>
    </location>
</feature>
<feature type="transmembrane region" description="Helical" evidence="1">
    <location>
        <begin position="82"/>
        <end position="102"/>
    </location>
</feature>
<feature type="transmembrane region" description="Helical" evidence="1">
    <location>
        <begin position="107"/>
        <end position="127"/>
    </location>
</feature>
<feature type="transmembrane region" description="Helical" evidence="1">
    <location>
        <begin position="132"/>
        <end position="152"/>
    </location>
</feature>
<feature type="transmembrane region" description="Helical" evidence="1">
    <location>
        <begin position="167"/>
        <end position="187"/>
    </location>
</feature>
<feature type="transmembrane region" description="Helical" evidence="1">
    <location>
        <begin position="210"/>
        <end position="230"/>
    </location>
</feature>
<feature type="transmembrane region" description="Helical" evidence="1">
    <location>
        <begin position="244"/>
        <end position="264"/>
    </location>
</feature>
<feature type="transmembrane region" description="Helical" evidence="1">
    <location>
        <begin position="278"/>
        <end position="298"/>
    </location>
</feature>
<feature type="transmembrane region" description="Helical" evidence="1">
    <location>
        <begin position="307"/>
        <end position="327"/>
    </location>
</feature>
<feature type="transmembrane region" description="Helical" evidence="1">
    <location>
        <begin position="334"/>
        <end position="354"/>
    </location>
</feature>
<feature type="transmembrane region" description="Helical" evidence="1">
    <location>
        <begin position="378"/>
        <end position="398"/>
    </location>
</feature>
<feature type="transmembrane region" description="Helical" evidence="1">
    <location>
        <begin position="410"/>
        <end position="430"/>
    </location>
</feature>
<feature type="transmembrane region" description="Helical" evidence="1">
    <location>
        <begin position="466"/>
        <end position="486"/>
    </location>
</feature>
<proteinExistence type="inferred from homology"/>